<protein>
    <recommendedName>
        <fullName evidence="2">SANT and BTB domain regulator of class switch recombination</fullName>
        <shortName>SANT and BTB domain regulator of CSR</shortName>
    </recommendedName>
</protein>
<sequence>MSRGCPENNNFLTNNNQMVLDMILYPLIGIPQTINWETVARLVPGLTPKECVKRFDELKSCGSSPVDNQYNPLMAAGEGPVETLATYIKSSLLDAQGDFQETPVDQDTVSKAGRHSIATTRNCSSESENCTARNAGEETGDSEGPNMVIHVCDEAKSLKEDFICPRDLLISEMKYFAEYLSVDAQRWEEVDISVHCDVHIFNWLIKYVKRNTKDSKDCELPALEPGNVISILISSEFLKMDSLVEQCIQYCHKNMNAIVAAPCNMNCINVNLLTRIADLFTHNEIDDLKDKKDKFRSKLFCKKIERLFDPEYFNPDSRNNAATLYRCCLCKKLLTRETERRISCIPGKINVDRHGNIIYIHIRDKTWDVHEYLNSLFEELKSWRDVYWRLWGTINWLTCSRCYQAFLCIEFSHCQYHSEVVVYSSAVNSLNTVGTGIYPCCNQKVLRFDPTQLTKGCKVRDHMVLLHDQGENDDSLSCPTAKILDDLHKHKDVIAVPFLKDPVSDPGVGSCDEKGLEYEILLEPNTPWGSKTGELNAFLSLKNWTLQLKQQSLFSEEEEYTTGSEVTEDEVGDEEEISKKQRKKEKPKKFTKPPKKQLSSPCSQKKEKTLEKSTSRDVSPFVVSMQKNKWDATRSLRFNQDAQREDDQRRMSEITGHLIKMRLGDLDRVKAKESKEFAGGIYSRLEAQVKASVPVTARQNSSDKNQSNIPQRHLFNYVHSNFIRNSQKLETSQMFIN</sequence>
<evidence type="ECO:0000250" key="1">
    <source>
        <dbReference type="UniProtKB" id="Q68FF0"/>
    </source>
</evidence>
<evidence type="ECO:0000250" key="2">
    <source>
        <dbReference type="UniProtKB" id="Q6NSI8"/>
    </source>
</evidence>
<evidence type="ECO:0000255" key="3">
    <source>
        <dbReference type="PROSITE-ProRule" id="PRU00037"/>
    </source>
</evidence>
<evidence type="ECO:0000255" key="4">
    <source>
        <dbReference type="PROSITE-ProRule" id="PRU00624"/>
    </source>
</evidence>
<evidence type="ECO:0000256" key="5">
    <source>
        <dbReference type="SAM" id="MobiDB-lite"/>
    </source>
</evidence>
<evidence type="ECO:0000305" key="6"/>
<feature type="chain" id="PRO_0000324600" description="SANT and BTB domain regulator of class switch recombination">
    <location>
        <begin position="1"/>
        <end position="737"/>
    </location>
</feature>
<feature type="domain" description="SANT" evidence="4">
    <location>
        <begin position="21"/>
        <end position="59"/>
    </location>
</feature>
<feature type="domain" description="BTB" evidence="3">
    <location>
        <begin position="147"/>
        <end position="255"/>
    </location>
</feature>
<feature type="region of interest" description="Disordered" evidence="5">
    <location>
        <begin position="555"/>
        <end position="618"/>
    </location>
</feature>
<feature type="compositionally biased region" description="Acidic residues" evidence="5">
    <location>
        <begin position="555"/>
        <end position="576"/>
    </location>
</feature>
<feature type="compositionally biased region" description="Basic residues" evidence="5">
    <location>
        <begin position="580"/>
        <end position="595"/>
    </location>
</feature>
<feature type="compositionally biased region" description="Basic and acidic residues" evidence="5">
    <location>
        <begin position="604"/>
        <end position="615"/>
    </location>
</feature>
<keyword id="KW-1185">Reference proteome</keyword>
<reference key="1">
    <citation type="journal article" date="2004" name="Genome Res.">
        <title>The status, quality, and expansion of the NIH full-length cDNA project: the Mammalian Gene Collection (MGC).</title>
        <authorList>
            <consortium name="The MGC Project Team"/>
        </authorList>
    </citation>
    <scope>NUCLEOTIDE SEQUENCE [LARGE SCALE MRNA]</scope>
    <source>
        <tissue>Testis</tissue>
    </source>
</reference>
<gene>
    <name evidence="2" type="primary">Sanbr</name>
</gene>
<name>SANBR_RAT</name>
<organism>
    <name type="scientific">Rattus norvegicus</name>
    <name type="common">Rat</name>
    <dbReference type="NCBI Taxonomy" id="10116"/>
    <lineage>
        <taxon>Eukaryota</taxon>
        <taxon>Metazoa</taxon>
        <taxon>Chordata</taxon>
        <taxon>Craniata</taxon>
        <taxon>Vertebrata</taxon>
        <taxon>Euteleostomi</taxon>
        <taxon>Mammalia</taxon>
        <taxon>Eutheria</taxon>
        <taxon>Euarchontoglires</taxon>
        <taxon>Glires</taxon>
        <taxon>Rodentia</taxon>
        <taxon>Myomorpha</taxon>
        <taxon>Muroidea</taxon>
        <taxon>Muridae</taxon>
        <taxon>Murinae</taxon>
        <taxon>Rattus</taxon>
    </lineage>
</organism>
<comment type="function">
    <text evidence="1">Negatively regulates class switch recombination or isotype switching in splenic B-cells.</text>
</comment>
<comment type="subunit">
    <text evidence="1">Homodimer. Interacts (via the BTB domain) with HDAC1 and NCOR2.</text>
</comment>
<comment type="domain">
    <text evidence="1">The BTB domain is important for homodimerization and for its function in negative regulation of class switch recombination.</text>
</comment>
<comment type="similarity">
    <text evidence="6">Belongs to the KIAA1841 family.</text>
</comment>
<proteinExistence type="evidence at transcript level"/>
<dbReference type="EMBL" id="BC128776">
    <property type="protein sequence ID" value="AAI28777.1"/>
    <property type="molecule type" value="mRNA"/>
</dbReference>
<dbReference type="RefSeq" id="NP_001094441.1">
    <property type="nucleotide sequence ID" value="NM_001100971.1"/>
</dbReference>
<dbReference type="RefSeq" id="XP_063129339.1">
    <property type="nucleotide sequence ID" value="XM_063273269.1"/>
</dbReference>
<dbReference type="SMR" id="A1A5R8"/>
<dbReference type="FunCoup" id="A1A5R8">
    <property type="interactions" value="2142"/>
</dbReference>
<dbReference type="STRING" id="10116.ENSRNOP00000071734"/>
<dbReference type="PhosphoSitePlus" id="A1A5R8"/>
<dbReference type="PaxDb" id="10116-ENSRNOP00000007385"/>
<dbReference type="Ensembl" id="ENSRNOT00000085886.2">
    <property type="protein sequence ID" value="ENSRNOP00000074352.2"/>
    <property type="gene ID" value="ENSRNOG00000054669.2"/>
</dbReference>
<dbReference type="GeneID" id="305579"/>
<dbReference type="UCSC" id="RGD:1305110">
    <property type="organism name" value="rat"/>
</dbReference>
<dbReference type="AGR" id="RGD:1305110"/>
<dbReference type="CTD" id="84542"/>
<dbReference type="RGD" id="1305110">
    <property type="gene designation" value="Sanbr"/>
</dbReference>
<dbReference type="eggNOG" id="ENOG502QRE4">
    <property type="taxonomic scope" value="Eukaryota"/>
</dbReference>
<dbReference type="GeneTree" id="ENSGT00390000008178"/>
<dbReference type="InParanoid" id="A1A5R8"/>
<dbReference type="OMA" id="CHQAFLC"/>
<dbReference type="OrthoDB" id="550012at2759"/>
<dbReference type="PhylomeDB" id="A1A5R8"/>
<dbReference type="TreeFam" id="TF324503"/>
<dbReference type="PRO" id="PR:A1A5R8"/>
<dbReference type="Proteomes" id="UP000002494">
    <property type="component" value="Chromosome 14"/>
</dbReference>
<dbReference type="Bgee" id="ENSRNOG00000054669">
    <property type="expression patterns" value="Expressed in cerebellum and 19 other cell types or tissues"/>
</dbReference>
<dbReference type="ExpressionAtlas" id="A1A5R8">
    <property type="expression patterns" value="baseline and differential"/>
</dbReference>
<dbReference type="GO" id="GO:0042802">
    <property type="term" value="F:identical protein binding"/>
    <property type="evidence" value="ECO:0000250"/>
    <property type="project" value="UniProtKB"/>
</dbReference>
<dbReference type="GO" id="GO:0045190">
    <property type="term" value="P:isotype switching"/>
    <property type="evidence" value="ECO:0000250"/>
    <property type="project" value="UniProtKB"/>
</dbReference>
<dbReference type="CDD" id="cd00167">
    <property type="entry name" value="SANT"/>
    <property type="match status" value="1"/>
</dbReference>
<dbReference type="Gene3D" id="3.30.710.10">
    <property type="entry name" value="Potassium Channel Kv1.1, Chain A"/>
    <property type="match status" value="1"/>
</dbReference>
<dbReference type="InterPro" id="IPR045902">
    <property type="entry name" value="SANBR-like"/>
</dbReference>
<dbReference type="InterPro" id="IPR021777">
    <property type="entry name" value="SANBR_BTB"/>
</dbReference>
<dbReference type="InterPro" id="IPR001005">
    <property type="entry name" value="SANT/Myb"/>
</dbReference>
<dbReference type="InterPro" id="IPR011333">
    <property type="entry name" value="SKP1/BTB/POZ_sf"/>
</dbReference>
<dbReference type="PANTHER" id="PTHR20946">
    <property type="entry name" value="SANT AND BTB DOMAIN REGULATOR OF CLASS SWITCH RECOMBINATION"/>
    <property type="match status" value="1"/>
</dbReference>
<dbReference type="PANTHER" id="PTHR20946:SF0">
    <property type="entry name" value="SANT AND BTB DOMAIN REGULATOR OF CLASS SWITCH RECOMBINATION"/>
    <property type="match status" value="1"/>
</dbReference>
<dbReference type="Pfam" id="PF11822">
    <property type="entry name" value="BTB_SANBR"/>
    <property type="match status" value="1"/>
</dbReference>
<accession>A1A5R8</accession>